<reference key="1">
    <citation type="journal article" date="2002" name="Proc. Natl. Acad. Sci. U.S.A.">
        <title>The genome sequence of the facultative intracellular pathogen Brucella melitensis.</title>
        <authorList>
            <person name="DelVecchio V.G."/>
            <person name="Kapatral V."/>
            <person name="Redkar R.J."/>
            <person name="Patra G."/>
            <person name="Mujer C."/>
            <person name="Los T."/>
            <person name="Ivanova N."/>
            <person name="Anderson I."/>
            <person name="Bhattacharyya A."/>
            <person name="Lykidis A."/>
            <person name="Reznik G."/>
            <person name="Jablonski L."/>
            <person name="Larsen N."/>
            <person name="D'Souza M."/>
            <person name="Bernal A."/>
            <person name="Mazur M."/>
            <person name="Goltsman E."/>
            <person name="Selkov E."/>
            <person name="Elzer P.H."/>
            <person name="Hagius S."/>
            <person name="O'Callaghan D."/>
            <person name="Letesson J.-J."/>
            <person name="Haselkorn R."/>
            <person name="Kyrpides N.C."/>
            <person name="Overbeek R."/>
        </authorList>
    </citation>
    <scope>NUCLEOTIDE SEQUENCE [LARGE SCALE GENOMIC DNA]</scope>
    <source>
        <strain>ATCC 23456 / CCUG 17765 / NCTC 10094 / 16M</strain>
    </source>
</reference>
<reference key="2">
    <citation type="journal article" date="2006" name="Cell. Microbiol.">
        <title>The stringent response mediator Rsh is required for Brucella melitensis and Brucella suis virulence, and for expression of the type IV secretion system virB.</title>
        <authorList>
            <person name="Dozot M."/>
            <person name="Boigegrain R.-A."/>
            <person name="Delrue R.-M."/>
            <person name="Hallez R."/>
            <person name="Ouahrani-Bettache S."/>
            <person name="Danese I."/>
            <person name="Letesson J.-J."/>
            <person name="De Bolle X."/>
            <person name="Koehler S."/>
        </authorList>
    </citation>
    <scope>FUNCTION IN STRINGENT RESPONSE</scope>
    <scope>DISRUPTION PHENOTYPE</scope>
    <source>
        <strain>ATCC 23456 / CCUG 17765 / NCTC 10094 / 16M</strain>
    </source>
</reference>
<evidence type="ECO:0000255" key="1">
    <source>
        <dbReference type="PROSITE-ProRule" id="PRU01007"/>
    </source>
</evidence>
<evidence type="ECO:0000255" key="2">
    <source>
        <dbReference type="PROSITE-ProRule" id="PRU01175"/>
    </source>
</evidence>
<evidence type="ECO:0000255" key="3">
    <source>
        <dbReference type="PROSITE-ProRule" id="PRU01228"/>
    </source>
</evidence>
<evidence type="ECO:0000256" key="4">
    <source>
        <dbReference type="SAM" id="MobiDB-lite"/>
    </source>
</evidence>
<evidence type="ECO:0000269" key="5">
    <source>
    </source>
</evidence>
<evidence type="ECO:0000305" key="6"/>
<sequence length="750" mass="83999">MMRQYELVERVQRYKPDVNEALLNKAYVYAMQKHRSQKRASGDPYFSHPLEVAAILTDMHLDEATIAIALLHDTIEDTTATRQEIDQLFGPEIGKLVEGLTKLKKLDLVSKKAVQAENLRKLLLAISEDVRVLLVKLADRLHNMRTLGVMREDKRLRIAEETMDIYAPLAGRMGMQDMREELEELAFRYINPDAWRAVTDRLAELLEKNRGLLQKIETDLSEIFEKNGIKASVKSRQKKPWSVFRKMESKGLSFEQLSDIFGFRVMVDTVQDCYRALGLIHTTWSMVPGRFKDYISTPKQNDYRSIHTTIIGPSRQRIELQIRTREMDEIAEFGVAAHSIYKDRGSANNPHKISTETNAYAWLRQTIEQLSEGDNPEEFLEHTKLELFQDQVFCFTPKGRLIALPRGATPIDFAYAVHTDIGDSCVGAKVNGRIMPLMTELKNGDEVDIIRSKAQVPPAAWESLVATGKARAAIRRATRSAVRKQYSGLGMRILERAFERAGKPFSKDILKPGLPRLARKDVEDVLAAVGRGELPSTDVVKAVYPDYQDTRVTTQNNPAKAGEKGWFNIQNAAGMIFKVPEGGEGAAAKVDPAATTPKPGKRALPIRGTNPDLPVRFAPEGAVPGDRIVGILQPGAGITIYPIQSPALTAYDDQPERWIDVRWDIDDQMSERFPARISVSAINSPGSLAEIAQIAAANDANIHNLSMVRTAPDFTEMIIDVEVWDLKHLNRIISQLKESASVSSAKRVNG</sequence>
<keyword id="KW-0067">ATP-binding</keyword>
<keyword id="KW-0342">GTP-binding</keyword>
<keyword id="KW-0418">Kinase</keyword>
<keyword id="KW-0547">Nucleotide-binding</keyword>
<keyword id="KW-0808">Transferase</keyword>
<gene>
    <name type="primary">rsh</name>
    <name type="ordered locus">BMEI1296</name>
</gene>
<proteinExistence type="evidence at protein level"/>
<protein>
    <recommendedName>
        <fullName>GTP pyrophosphokinase rsh</fullName>
        <ecNumber>2.7.6.5</ecNumber>
    </recommendedName>
    <alternativeName>
        <fullName>(p)ppGpp synthase</fullName>
    </alternativeName>
    <alternativeName>
        <fullName>ATP:GTP 3'-pyrophosphotransferase</fullName>
    </alternativeName>
</protein>
<dbReference type="EC" id="2.7.6.5"/>
<dbReference type="EMBL" id="AE008917">
    <property type="protein sequence ID" value="AAL52477.1"/>
    <property type="status" value="ALT_INIT"/>
    <property type="molecule type" value="Genomic_DNA"/>
</dbReference>
<dbReference type="PIR" id="AB3414">
    <property type="entry name" value="AB3414"/>
</dbReference>
<dbReference type="RefSeq" id="WP_004683389.1">
    <property type="nucleotide sequence ID" value="NZ_GG703778.1"/>
</dbReference>
<dbReference type="SMR" id="Q8YG65"/>
<dbReference type="GeneID" id="29594139"/>
<dbReference type="KEGG" id="bme:BMEI1296"/>
<dbReference type="KEGG" id="bmel:DK63_109"/>
<dbReference type="PATRIC" id="fig|224914.52.peg.114"/>
<dbReference type="eggNOG" id="COG0317">
    <property type="taxonomic scope" value="Bacteria"/>
</dbReference>
<dbReference type="PhylomeDB" id="Q8YG65"/>
<dbReference type="PRO" id="PR:Q8YG65"/>
<dbReference type="Proteomes" id="UP000000419">
    <property type="component" value="Chromosome I"/>
</dbReference>
<dbReference type="GO" id="GO:0005886">
    <property type="term" value="C:plasma membrane"/>
    <property type="evidence" value="ECO:0007669"/>
    <property type="project" value="TreeGrafter"/>
</dbReference>
<dbReference type="GO" id="GO:0005524">
    <property type="term" value="F:ATP binding"/>
    <property type="evidence" value="ECO:0007669"/>
    <property type="project" value="UniProtKB-KW"/>
</dbReference>
<dbReference type="GO" id="GO:0005525">
    <property type="term" value="F:GTP binding"/>
    <property type="evidence" value="ECO:0007669"/>
    <property type="project" value="UniProtKB-KW"/>
</dbReference>
<dbReference type="GO" id="GO:0008728">
    <property type="term" value="F:GTP diphosphokinase activity"/>
    <property type="evidence" value="ECO:0007669"/>
    <property type="project" value="UniProtKB-EC"/>
</dbReference>
<dbReference type="GO" id="GO:0008893">
    <property type="term" value="F:guanosine-3',5'-bis(diphosphate) 3'-diphosphatase activity"/>
    <property type="evidence" value="ECO:0007669"/>
    <property type="project" value="TreeGrafter"/>
</dbReference>
<dbReference type="GO" id="GO:0016301">
    <property type="term" value="F:kinase activity"/>
    <property type="evidence" value="ECO:0007669"/>
    <property type="project" value="UniProtKB-KW"/>
</dbReference>
<dbReference type="GO" id="GO:0015969">
    <property type="term" value="P:guanosine tetraphosphate metabolic process"/>
    <property type="evidence" value="ECO:0007669"/>
    <property type="project" value="InterPro"/>
</dbReference>
<dbReference type="GO" id="GO:0042594">
    <property type="term" value="P:response to starvation"/>
    <property type="evidence" value="ECO:0007669"/>
    <property type="project" value="TreeGrafter"/>
</dbReference>
<dbReference type="CDD" id="cd04876">
    <property type="entry name" value="ACT_RelA-SpoT"/>
    <property type="match status" value="1"/>
</dbReference>
<dbReference type="CDD" id="cd00077">
    <property type="entry name" value="HDc"/>
    <property type="match status" value="1"/>
</dbReference>
<dbReference type="CDD" id="cd05399">
    <property type="entry name" value="NT_Rel-Spo_like"/>
    <property type="match status" value="1"/>
</dbReference>
<dbReference type="CDD" id="cd01668">
    <property type="entry name" value="TGS_RSH"/>
    <property type="match status" value="1"/>
</dbReference>
<dbReference type="FunFam" id="3.10.20.30:FF:000002">
    <property type="entry name" value="GTP pyrophosphokinase (RelA/SpoT)"/>
    <property type="match status" value="1"/>
</dbReference>
<dbReference type="FunFam" id="1.10.3210.10:FF:000001">
    <property type="entry name" value="GTP pyrophosphokinase RelA"/>
    <property type="match status" value="1"/>
</dbReference>
<dbReference type="FunFam" id="3.30.460.10:FF:000001">
    <property type="entry name" value="GTP pyrophosphokinase RelA"/>
    <property type="match status" value="1"/>
</dbReference>
<dbReference type="Gene3D" id="3.10.20.30">
    <property type="match status" value="1"/>
</dbReference>
<dbReference type="Gene3D" id="3.30.70.260">
    <property type="match status" value="1"/>
</dbReference>
<dbReference type="Gene3D" id="3.30.460.10">
    <property type="entry name" value="Beta Polymerase, domain 2"/>
    <property type="match status" value="1"/>
</dbReference>
<dbReference type="Gene3D" id="1.10.3210.10">
    <property type="entry name" value="Hypothetical protein af1432"/>
    <property type="match status" value="1"/>
</dbReference>
<dbReference type="InterPro" id="IPR045865">
    <property type="entry name" value="ACT-like_dom_sf"/>
</dbReference>
<dbReference type="InterPro" id="IPR002912">
    <property type="entry name" value="ACT_dom"/>
</dbReference>
<dbReference type="InterPro" id="IPR012675">
    <property type="entry name" value="Beta-grasp_dom_sf"/>
</dbReference>
<dbReference type="InterPro" id="IPR003607">
    <property type="entry name" value="HD/PDEase_dom"/>
</dbReference>
<dbReference type="InterPro" id="IPR006674">
    <property type="entry name" value="HD_domain"/>
</dbReference>
<dbReference type="InterPro" id="IPR043519">
    <property type="entry name" value="NT_sf"/>
</dbReference>
<dbReference type="InterPro" id="IPR004811">
    <property type="entry name" value="RelA/Spo_fam"/>
</dbReference>
<dbReference type="InterPro" id="IPR045600">
    <property type="entry name" value="RelA/SpoT_AH_RIS"/>
</dbReference>
<dbReference type="InterPro" id="IPR007685">
    <property type="entry name" value="RelA_SpoT"/>
</dbReference>
<dbReference type="InterPro" id="IPR004095">
    <property type="entry name" value="TGS"/>
</dbReference>
<dbReference type="InterPro" id="IPR012676">
    <property type="entry name" value="TGS-like"/>
</dbReference>
<dbReference type="InterPro" id="IPR033655">
    <property type="entry name" value="TGS_RelA/SpoT"/>
</dbReference>
<dbReference type="NCBIfam" id="TIGR00691">
    <property type="entry name" value="spoT_relA"/>
    <property type="match status" value="1"/>
</dbReference>
<dbReference type="PANTHER" id="PTHR21262:SF36">
    <property type="entry name" value="BIFUNCTIONAL (P)PPGPP SYNTHASE_HYDROLASE SPOT"/>
    <property type="match status" value="1"/>
</dbReference>
<dbReference type="PANTHER" id="PTHR21262">
    <property type="entry name" value="GUANOSINE-3',5'-BIS DIPHOSPHATE 3'-PYROPHOSPHOHYDROLASE"/>
    <property type="match status" value="1"/>
</dbReference>
<dbReference type="Pfam" id="PF13291">
    <property type="entry name" value="ACT_4"/>
    <property type="match status" value="1"/>
</dbReference>
<dbReference type="Pfam" id="PF13328">
    <property type="entry name" value="HD_4"/>
    <property type="match status" value="1"/>
</dbReference>
<dbReference type="Pfam" id="PF19296">
    <property type="entry name" value="RelA_AH_RIS"/>
    <property type="match status" value="1"/>
</dbReference>
<dbReference type="Pfam" id="PF04607">
    <property type="entry name" value="RelA_SpoT"/>
    <property type="match status" value="1"/>
</dbReference>
<dbReference type="Pfam" id="PF02824">
    <property type="entry name" value="TGS"/>
    <property type="match status" value="1"/>
</dbReference>
<dbReference type="SMART" id="SM00471">
    <property type="entry name" value="HDc"/>
    <property type="match status" value="1"/>
</dbReference>
<dbReference type="SMART" id="SM00954">
    <property type="entry name" value="RelA_SpoT"/>
    <property type="match status" value="1"/>
</dbReference>
<dbReference type="SUPFAM" id="SSF55021">
    <property type="entry name" value="ACT-like"/>
    <property type="match status" value="1"/>
</dbReference>
<dbReference type="SUPFAM" id="SSF109604">
    <property type="entry name" value="HD-domain/PDEase-like"/>
    <property type="match status" value="1"/>
</dbReference>
<dbReference type="SUPFAM" id="SSF81301">
    <property type="entry name" value="Nucleotidyltransferase"/>
    <property type="match status" value="1"/>
</dbReference>
<dbReference type="SUPFAM" id="SSF81271">
    <property type="entry name" value="TGS-like"/>
    <property type="match status" value="1"/>
</dbReference>
<dbReference type="PROSITE" id="PS51671">
    <property type="entry name" value="ACT"/>
    <property type="match status" value="1"/>
</dbReference>
<dbReference type="PROSITE" id="PS51831">
    <property type="entry name" value="HD"/>
    <property type="match status" value="1"/>
</dbReference>
<dbReference type="PROSITE" id="PS51880">
    <property type="entry name" value="TGS"/>
    <property type="match status" value="1"/>
</dbReference>
<organism>
    <name type="scientific">Brucella melitensis biotype 1 (strain ATCC 23456 / CCUG 17765 / NCTC 10094 / 16M)</name>
    <dbReference type="NCBI Taxonomy" id="224914"/>
    <lineage>
        <taxon>Bacteria</taxon>
        <taxon>Pseudomonadati</taxon>
        <taxon>Pseudomonadota</taxon>
        <taxon>Alphaproteobacteria</taxon>
        <taxon>Hyphomicrobiales</taxon>
        <taxon>Brucellaceae</taxon>
        <taxon>Brucella/Ochrobactrum group</taxon>
        <taxon>Brucella</taxon>
    </lineage>
</organism>
<name>RSH_BRUME</name>
<comment type="function">
    <text evidence="5">Functions as a (p)ppGpp synthase. In eubacteria ppGpp (guanosine 3'-diphosphate 5'-diphosphate) is a mediator of the stringent response that coordinates a variety of cellular activities in response to changes in nutritional abundance. It is necessary for persistence in mice, essential for intracellular growth of Brucella and required for expression of the type IV secretion system VirB and therefore plays a role in adaptation of Brucella to its intracellular host environment.</text>
</comment>
<comment type="catalytic activity">
    <reaction>
        <text>GTP + ATP = guanosine 3'-diphosphate 5'-triphosphate + AMP</text>
        <dbReference type="Rhea" id="RHEA:22088"/>
        <dbReference type="ChEBI" id="CHEBI:30616"/>
        <dbReference type="ChEBI" id="CHEBI:37565"/>
        <dbReference type="ChEBI" id="CHEBI:142410"/>
        <dbReference type="ChEBI" id="CHEBI:456215"/>
        <dbReference type="EC" id="2.7.6.5"/>
    </reaction>
</comment>
<comment type="disruption phenotype">
    <text evidence="5">Cells show morphological abnormalities such as branching and swelling forms during vegetative growth. It is unable to persist during stationary phase, presumably because of nutrient limitation occurring during this growth phase. It shows an important growth defect in human HeLa cells and in ovine macrophages MOCL3. At four weeks post infection the number of viable bacteria (deletion mutant) in mouse spleen is markedly reduced compared to the wild-type. The deletion mutant shows very low levels or absence of VirB at all time points of growth.</text>
</comment>
<comment type="similarity">
    <text evidence="6">Belongs to the RelA/SpoT family.</text>
</comment>
<comment type="sequence caution" evidence="6">
    <conflict type="erroneous initiation">
        <sequence resource="EMBL-CDS" id="AAL52477"/>
    </conflict>
</comment>
<feature type="chain" id="PRO_0000322561" description="GTP pyrophosphokinase rsh">
    <location>
        <begin position="1"/>
        <end position="750"/>
    </location>
</feature>
<feature type="domain" description="HD" evidence="2">
    <location>
        <begin position="45"/>
        <end position="144"/>
    </location>
</feature>
<feature type="domain" description="TGS" evidence="3">
    <location>
        <begin position="390"/>
        <end position="451"/>
    </location>
</feature>
<feature type="domain" description="ACT" evidence="1">
    <location>
        <begin position="676"/>
        <end position="750"/>
    </location>
</feature>
<feature type="region of interest" description="Disordered" evidence="4">
    <location>
        <begin position="587"/>
        <end position="613"/>
    </location>
</feature>
<accession>Q8YG65</accession>